<name>DARP_HAEIN</name>
<protein>
    <recommendedName>
        <fullName evidence="1">Dual-action ribosomal maturation protein DarP</fullName>
    </recommendedName>
    <alternativeName>
        <fullName evidence="1">Large ribosomal subunit assembly factor DarP</fullName>
    </alternativeName>
</protein>
<gene>
    <name evidence="1" type="primary">darP</name>
    <name type="ordered locus">HI_1151</name>
</gene>
<evidence type="ECO:0000255" key="1">
    <source>
        <dbReference type="HAMAP-Rule" id="MF_00765"/>
    </source>
</evidence>
<proteinExistence type="inferred from homology"/>
<sequence>MAKRKKKEVFDWEDEDQEEIIWVSKSEIKRDAEDLKQLGEKIVNLTKANLAKIPLDESLLDAIELAQRLQKEARRRQLQYIGKLFRGIDVEPIREALDKIENKHNQQQAMLHKIEKVRDELVEKGDVALTDLLNDYPNGDRQQLRNLIRSAQKELEQNKPSKAYREIYQMLKVLMLED</sequence>
<accession>P45076</accession>
<feature type="chain" id="PRO_0000208217" description="Dual-action ribosomal maturation protein DarP">
    <location>
        <begin position="1"/>
        <end position="178"/>
    </location>
</feature>
<reference key="1">
    <citation type="journal article" date="1995" name="Science">
        <title>Whole-genome random sequencing and assembly of Haemophilus influenzae Rd.</title>
        <authorList>
            <person name="Fleischmann R.D."/>
            <person name="Adams M.D."/>
            <person name="White O."/>
            <person name="Clayton R.A."/>
            <person name="Kirkness E.F."/>
            <person name="Kerlavage A.R."/>
            <person name="Bult C.J."/>
            <person name="Tomb J.-F."/>
            <person name="Dougherty B.A."/>
            <person name="Merrick J.M."/>
            <person name="McKenney K."/>
            <person name="Sutton G.G."/>
            <person name="FitzHugh W."/>
            <person name="Fields C.A."/>
            <person name="Gocayne J.D."/>
            <person name="Scott J.D."/>
            <person name="Shirley R."/>
            <person name="Liu L.-I."/>
            <person name="Glodek A."/>
            <person name="Kelley J.M."/>
            <person name="Weidman J.F."/>
            <person name="Phillips C.A."/>
            <person name="Spriggs T."/>
            <person name="Hedblom E."/>
            <person name="Cotton M.D."/>
            <person name="Utterback T.R."/>
            <person name="Hanna M.C."/>
            <person name="Nguyen D.T."/>
            <person name="Saudek D.M."/>
            <person name="Brandon R.C."/>
            <person name="Fine L.D."/>
            <person name="Fritchman J.L."/>
            <person name="Fuhrmann J.L."/>
            <person name="Geoghagen N.S.M."/>
            <person name="Gnehm C.L."/>
            <person name="McDonald L.A."/>
            <person name="Small K.V."/>
            <person name="Fraser C.M."/>
            <person name="Smith H.O."/>
            <person name="Venter J.C."/>
        </authorList>
    </citation>
    <scope>NUCLEOTIDE SEQUENCE [LARGE SCALE GENOMIC DNA]</scope>
    <source>
        <strain>ATCC 51907 / DSM 11121 / KW20 / Rd</strain>
    </source>
</reference>
<keyword id="KW-0963">Cytoplasm</keyword>
<keyword id="KW-1185">Reference proteome</keyword>
<keyword id="KW-0690">Ribosome biogenesis</keyword>
<keyword id="KW-0694">RNA-binding</keyword>
<keyword id="KW-0699">rRNA-binding</keyword>
<comment type="function">
    <text evidence="1">Member of a network of 50S ribosomal subunit biogenesis factors which assembles along the 30S-50S interface, preventing incorrect 23S rRNA structures from forming. Promotes peptidyl transferase center (PTC) maturation.</text>
</comment>
<comment type="subcellular location">
    <subcellularLocation>
        <location evidence="1">Cytoplasm</location>
    </subcellularLocation>
    <text evidence="1">Associates with late stage pre-50S ribosomal subunits.</text>
</comment>
<comment type="similarity">
    <text evidence="1">Belongs to the DarP family.</text>
</comment>
<organism>
    <name type="scientific">Haemophilus influenzae (strain ATCC 51907 / DSM 11121 / KW20 / Rd)</name>
    <dbReference type="NCBI Taxonomy" id="71421"/>
    <lineage>
        <taxon>Bacteria</taxon>
        <taxon>Pseudomonadati</taxon>
        <taxon>Pseudomonadota</taxon>
        <taxon>Gammaproteobacteria</taxon>
        <taxon>Pasteurellales</taxon>
        <taxon>Pasteurellaceae</taxon>
        <taxon>Haemophilus</taxon>
    </lineage>
</organism>
<dbReference type="EMBL" id="L42023">
    <property type="protein sequence ID" value="AAC22806.1"/>
    <property type="molecule type" value="Genomic_DNA"/>
</dbReference>
<dbReference type="PIR" id="C64168">
    <property type="entry name" value="C64168"/>
</dbReference>
<dbReference type="RefSeq" id="NP_439309.1">
    <property type="nucleotide sequence ID" value="NC_000907.1"/>
</dbReference>
<dbReference type="SMR" id="P45076"/>
<dbReference type="STRING" id="71421.HI_1151"/>
<dbReference type="EnsemblBacteria" id="AAC22806">
    <property type="protein sequence ID" value="AAC22806"/>
    <property type="gene ID" value="HI_1151"/>
</dbReference>
<dbReference type="KEGG" id="hin:HI_1151"/>
<dbReference type="PATRIC" id="fig|71421.8.peg.1201"/>
<dbReference type="eggNOG" id="COG3028">
    <property type="taxonomic scope" value="Bacteria"/>
</dbReference>
<dbReference type="HOGENOM" id="CLU_106757_2_0_6"/>
<dbReference type="OrthoDB" id="5293604at2"/>
<dbReference type="PhylomeDB" id="P45076"/>
<dbReference type="BioCyc" id="HINF71421:G1GJ1-1184-MONOMER"/>
<dbReference type="Proteomes" id="UP000000579">
    <property type="component" value="Chromosome"/>
</dbReference>
<dbReference type="GO" id="GO:0005829">
    <property type="term" value="C:cytosol"/>
    <property type="evidence" value="ECO:0000318"/>
    <property type="project" value="GO_Central"/>
</dbReference>
<dbReference type="GO" id="GO:0043022">
    <property type="term" value="F:ribosome binding"/>
    <property type="evidence" value="ECO:0007669"/>
    <property type="project" value="UniProtKB-UniRule"/>
</dbReference>
<dbReference type="GO" id="GO:0019843">
    <property type="term" value="F:rRNA binding"/>
    <property type="evidence" value="ECO:0007669"/>
    <property type="project" value="UniProtKB-UniRule"/>
</dbReference>
<dbReference type="GO" id="GO:1902626">
    <property type="term" value="P:assembly of large subunit precursor of preribosome"/>
    <property type="evidence" value="ECO:0007669"/>
    <property type="project" value="UniProtKB-UniRule"/>
</dbReference>
<dbReference type="CDD" id="cd16331">
    <property type="entry name" value="YjgA-like"/>
    <property type="match status" value="1"/>
</dbReference>
<dbReference type="FunFam" id="1.10.60.30:FF:000001">
    <property type="entry name" value="UPF0307 protein YjgA"/>
    <property type="match status" value="1"/>
</dbReference>
<dbReference type="FunFam" id="1.10.60.30:FF:000002">
    <property type="entry name" value="UPF0307 protein YjgA"/>
    <property type="match status" value="1"/>
</dbReference>
<dbReference type="Gene3D" id="1.10.60.30">
    <property type="entry name" value="PSPTO4464-like domains"/>
    <property type="match status" value="2"/>
</dbReference>
<dbReference type="HAMAP" id="MF_00765">
    <property type="entry name" value="DarP"/>
    <property type="match status" value="1"/>
</dbReference>
<dbReference type="InterPro" id="IPR006839">
    <property type="entry name" value="DarP"/>
</dbReference>
<dbReference type="InterPro" id="IPR023153">
    <property type="entry name" value="DarP_sf"/>
</dbReference>
<dbReference type="NCBIfam" id="NF003593">
    <property type="entry name" value="PRK05255.1-1"/>
    <property type="match status" value="1"/>
</dbReference>
<dbReference type="PANTHER" id="PTHR38101">
    <property type="entry name" value="UPF0307 PROTEIN YJGA"/>
    <property type="match status" value="1"/>
</dbReference>
<dbReference type="PANTHER" id="PTHR38101:SF1">
    <property type="entry name" value="UPF0307 PROTEIN YJGA"/>
    <property type="match status" value="1"/>
</dbReference>
<dbReference type="Pfam" id="PF04751">
    <property type="entry name" value="DarP"/>
    <property type="match status" value="1"/>
</dbReference>
<dbReference type="PIRSF" id="PIRSF016183">
    <property type="entry name" value="UCP016183"/>
    <property type="match status" value="1"/>
</dbReference>
<dbReference type="SUPFAM" id="SSF158710">
    <property type="entry name" value="PSPTO4464-like"/>
    <property type="match status" value="1"/>
</dbReference>